<reference key="1">
    <citation type="journal article" date="2001" name="Science">
        <title>The genome of the natural genetic engineer Agrobacterium tumefaciens C58.</title>
        <authorList>
            <person name="Wood D.W."/>
            <person name="Setubal J.C."/>
            <person name="Kaul R."/>
            <person name="Monks D.E."/>
            <person name="Kitajima J.P."/>
            <person name="Okura V.K."/>
            <person name="Zhou Y."/>
            <person name="Chen L."/>
            <person name="Wood G.E."/>
            <person name="Almeida N.F. Jr."/>
            <person name="Woo L."/>
            <person name="Chen Y."/>
            <person name="Paulsen I.T."/>
            <person name="Eisen J.A."/>
            <person name="Karp P.D."/>
            <person name="Bovee D. Sr."/>
            <person name="Chapman P."/>
            <person name="Clendenning J."/>
            <person name="Deatherage G."/>
            <person name="Gillet W."/>
            <person name="Grant C."/>
            <person name="Kutyavin T."/>
            <person name="Levy R."/>
            <person name="Li M.-J."/>
            <person name="McClelland E."/>
            <person name="Palmieri A."/>
            <person name="Raymond C."/>
            <person name="Rouse G."/>
            <person name="Saenphimmachak C."/>
            <person name="Wu Z."/>
            <person name="Romero P."/>
            <person name="Gordon D."/>
            <person name="Zhang S."/>
            <person name="Yoo H."/>
            <person name="Tao Y."/>
            <person name="Biddle P."/>
            <person name="Jung M."/>
            <person name="Krespan W."/>
            <person name="Perry M."/>
            <person name="Gordon-Kamm B."/>
            <person name="Liao L."/>
            <person name="Kim S."/>
            <person name="Hendrick C."/>
            <person name="Zhao Z.-Y."/>
            <person name="Dolan M."/>
            <person name="Chumley F."/>
            <person name="Tingey S.V."/>
            <person name="Tomb J.-F."/>
            <person name="Gordon M.P."/>
            <person name="Olson M.V."/>
            <person name="Nester E.W."/>
        </authorList>
    </citation>
    <scope>NUCLEOTIDE SEQUENCE [LARGE SCALE GENOMIC DNA]</scope>
    <source>
        <strain>C58 / ATCC 33970</strain>
    </source>
</reference>
<reference key="2">
    <citation type="journal article" date="2001" name="Science">
        <title>Genome sequence of the plant pathogen and biotechnology agent Agrobacterium tumefaciens C58.</title>
        <authorList>
            <person name="Goodner B."/>
            <person name="Hinkle G."/>
            <person name="Gattung S."/>
            <person name="Miller N."/>
            <person name="Blanchard M."/>
            <person name="Qurollo B."/>
            <person name="Goldman B.S."/>
            <person name="Cao Y."/>
            <person name="Askenazi M."/>
            <person name="Halling C."/>
            <person name="Mullin L."/>
            <person name="Houmiel K."/>
            <person name="Gordon J."/>
            <person name="Vaudin M."/>
            <person name="Iartchouk O."/>
            <person name="Epp A."/>
            <person name="Liu F."/>
            <person name="Wollam C."/>
            <person name="Allinger M."/>
            <person name="Doughty D."/>
            <person name="Scott C."/>
            <person name="Lappas C."/>
            <person name="Markelz B."/>
            <person name="Flanagan C."/>
            <person name="Crowell C."/>
            <person name="Gurson J."/>
            <person name="Lomo C."/>
            <person name="Sear C."/>
            <person name="Strub G."/>
            <person name="Cielo C."/>
            <person name="Slater S."/>
        </authorList>
    </citation>
    <scope>NUCLEOTIDE SEQUENCE [LARGE SCALE GENOMIC DNA]</scope>
    <source>
        <strain>C58 / ATCC 33970</strain>
    </source>
</reference>
<comment type="catalytic activity">
    <reaction evidence="1">
        <text>(S)-2,3,4,5-tetrahydrodipicolinate + succinyl-CoA + H2O = (S)-2-succinylamino-6-oxoheptanedioate + CoA</text>
        <dbReference type="Rhea" id="RHEA:17325"/>
        <dbReference type="ChEBI" id="CHEBI:15377"/>
        <dbReference type="ChEBI" id="CHEBI:15685"/>
        <dbReference type="ChEBI" id="CHEBI:16845"/>
        <dbReference type="ChEBI" id="CHEBI:57287"/>
        <dbReference type="ChEBI" id="CHEBI:57292"/>
        <dbReference type="EC" id="2.3.1.117"/>
    </reaction>
</comment>
<comment type="pathway">
    <text evidence="1">Amino-acid biosynthesis; L-lysine biosynthesis via DAP pathway; LL-2,6-diaminopimelate from (S)-tetrahydrodipicolinate (succinylase route): step 1/3.</text>
</comment>
<comment type="subunit">
    <text evidence="1">Homotrimer.</text>
</comment>
<comment type="subcellular location">
    <subcellularLocation>
        <location evidence="1">Cytoplasm</location>
    </subcellularLocation>
</comment>
<comment type="similarity">
    <text evidence="1">Belongs to the transferase hexapeptide repeat family.</text>
</comment>
<protein>
    <recommendedName>
        <fullName evidence="1">2,3,4,5-tetrahydropyridine-2,6-dicarboxylate N-succinyltransferase</fullName>
        <ecNumber evidence="1">2.3.1.117</ecNumber>
    </recommendedName>
    <alternativeName>
        <fullName evidence="1">Tetrahydrodipicolinate N-succinyltransferase</fullName>
        <shortName evidence="1">THDP succinyltransferase</shortName>
        <shortName evidence="1">THP succinyltransferase</shortName>
        <shortName evidence="1">Tetrahydropicolinate succinylase</shortName>
    </alternativeName>
</protein>
<accession>Q8UIC6</accession>
<accession>Q7D1L2</accession>
<keyword id="KW-0012">Acyltransferase</keyword>
<keyword id="KW-0028">Amino-acid biosynthesis</keyword>
<keyword id="KW-0963">Cytoplasm</keyword>
<keyword id="KW-0220">Diaminopimelate biosynthesis</keyword>
<keyword id="KW-0457">Lysine biosynthesis</keyword>
<keyword id="KW-1185">Reference proteome</keyword>
<keyword id="KW-0677">Repeat</keyword>
<keyword id="KW-0808">Transferase</keyword>
<gene>
    <name evidence="1" type="primary">dapD</name>
    <name type="ordered locus">Atu0371</name>
    <name type="ORF">AGR_C_648</name>
</gene>
<dbReference type="EC" id="2.3.1.117" evidence="1"/>
<dbReference type="EMBL" id="AE007869">
    <property type="protein sequence ID" value="AAK86188.2"/>
    <property type="molecule type" value="Genomic_DNA"/>
</dbReference>
<dbReference type="PIR" id="AC2622">
    <property type="entry name" value="AC2622"/>
</dbReference>
<dbReference type="PIR" id="C97404">
    <property type="entry name" value="C97404"/>
</dbReference>
<dbReference type="RefSeq" id="NP_353403.2">
    <property type="nucleotide sequence ID" value="NC_003062.2"/>
</dbReference>
<dbReference type="RefSeq" id="WP_003493576.1">
    <property type="nucleotide sequence ID" value="NC_003062.2"/>
</dbReference>
<dbReference type="SMR" id="Q8UIC6"/>
<dbReference type="STRING" id="176299.Atu0371"/>
<dbReference type="EnsemblBacteria" id="AAK86188">
    <property type="protein sequence ID" value="AAK86188"/>
    <property type="gene ID" value="Atu0371"/>
</dbReference>
<dbReference type="GeneID" id="1132409"/>
<dbReference type="KEGG" id="atu:Atu0371"/>
<dbReference type="PATRIC" id="fig|176299.10.peg.362"/>
<dbReference type="eggNOG" id="COG2171">
    <property type="taxonomic scope" value="Bacteria"/>
</dbReference>
<dbReference type="HOGENOM" id="CLU_050859_0_1_5"/>
<dbReference type="OrthoDB" id="9775362at2"/>
<dbReference type="PhylomeDB" id="Q8UIC6"/>
<dbReference type="BioCyc" id="AGRO:ATU0371-MONOMER"/>
<dbReference type="UniPathway" id="UPA00034">
    <property type="reaction ID" value="UER00019"/>
</dbReference>
<dbReference type="PRO" id="PR:Q8UIC6"/>
<dbReference type="Proteomes" id="UP000000813">
    <property type="component" value="Chromosome circular"/>
</dbReference>
<dbReference type="GO" id="GO:0005737">
    <property type="term" value="C:cytoplasm"/>
    <property type="evidence" value="ECO:0007669"/>
    <property type="project" value="UniProtKB-SubCell"/>
</dbReference>
<dbReference type="GO" id="GO:0008666">
    <property type="term" value="F:2,3,4,5-tetrahydropyridine-2,6-dicarboxylate N-succinyltransferase activity"/>
    <property type="evidence" value="ECO:0007669"/>
    <property type="project" value="UniProtKB-UniRule"/>
</dbReference>
<dbReference type="GO" id="GO:0019877">
    <property type="term" value="P:diaminopimelate biosynthetic process"/>
    <property type="evidence" value="ECO:0007669"/>
    <property type="project" value="UniProtKB-UniRule"/>
</dbReference>
<dbReference type="GO" id="GO:0009089">
    <property type="term" value="P:lysine biosynthetic process via diaminopimelate"/>
    <property type="evidence" value="ECO:0007669"/>
    <property type="project" value="UniProtKB-UniRule"/>
</dbReference>
<dbReference type="CDD" id="cd03350">
    <property type="entry name" value="LbH_THP_succinylT"/>
    <property type="match status" value="1"/>
</dbReference>
<dbReference type="Gene3D" id="2.160.10.10">
    <property type="entry name" value="Hexapeptide repeat proteins"/>
    <property type="match status" value="1"/>
</dbReference>
<dbReference type="Gene3D" id="1.10.166.10">
    <property type="entry name" value="Tetrahydrodipicolinate-N-succinyltransferase, N-terminal domain"/>
    <property type="match status" value="1"/>
</dbReference>
<dbReference type="HAMAP" id="MF_00811">
    <property type="entry name" value="DapD"/>
    <property type="match status" value="1"/>
</dbReference>
<dbReference type="InterPro" id="IPR005664">
    <property type="entry name" value="DapD_Trfase_Hexpep_rpt_fam"/>
</dbReference>
<dbReference type="InterPro" id="IPR001451">
    <property type="entry name" value="Hexapep"/>
</dbReference>
<dbReference type="InterPro" id="IPR018357">
    <property type="entry name" value="Hexapep_transf_CS"/>
</dbReference>
<dbReference type="InterPro" id="IPR023180">
    <property type="entry name" value="THP_succinylTrfase_dom1"/>
</dbReference>
<dbReference type="InterPro" id="IPR037133">
    <property type="entry name" value="THP_succinylTrfase_N_sf"/>
</dbReference>
<dbReference type="InterPro" id="IPR050179">
    <property type="entry name" value="Trans_hexapeptide_repeat"/>
</dbReference>
<dbReference type="InterPro" id="IPR011004">
    <property type="entry name" value="Trimer_LpxA-like_sf"/>
</dbReference>
<dbReference type="NCBIfam" id="TIGR00965">
    <property type="entry name" value="dapD"/>
    <property type="match status" value="1"/>
</dbReference>
<dbReference type="NCBIfam" id="NF008808">
    <property type="entry name" value="PRK11830.1"/>
    <property type="match status" value="1"/>
</dbReference>
<dbReference type="PANTHER" id="PTHR43300:SF10">
    <property type="entry name" value="2,3,4,5-TETRAHYDROPYRIDINE-2,6-DICARBOXYLATE N-ACETYLTRANSFERASE"/>
    <property type="match status" value="1"/>
</dbReference>
<dbReference type="PANTHER" id="PTHR43300">
    <property type="entry name" value="ACETYLTRANSFERASE"/>
    <property type="match status" value="1"/>
</dbReference>
<dbReference type="Pfam" id="PF14602">
    <property type="entry name" value="Hexapep_2"/>
    <property type="match status" value="1"/>
</dbReference>
<dbReference type="Pfam" id="PF14805">
    <property type="entry name" value="THDPS_N_2"/>
    <property type="match status" value="1"/>
</dbReference>
<dbReference type="SUPFAM" id="SSF51161">
    <property type="entry name" value="Trimeric LpxA-like enzymes"/>
    <property type="match status" value="1"/>
</dbReference>
<dbReference type="PROSITE" id="PS00101">
    <property type="entry name" value="HEXAPEP_TRANSFERASES"/>
    <property type="match status" value="1"/>
</dbReference>
<evidence type="ECO:0000255" key="1">
    <source>
        <dbReference type="HAMAP-Rule" id="MF_00811"/>
    </source>
</evidence>
<feature type="chain" id="PRO_0000196911" description="2,3,4,5-tetrahydropyridine-2,6-dicarboxylate N-succinyltransferase">
    <location>
        <begin position="1"/>
        <end position="284"/>
    </location>
</feature>
<feature type="binding site" evidence="1">
    <location>
        <position position="111"/>
    </location>
    <ligand>
        <name>substrate</name>
    </ligand>
</feature>
<feature type="binding site" evidence="1">
    <location>
        <position position="148"/>
    </location>
    <ligand>
        <name>substrate</name>
    </ligand>
</feature>
<name>DAPD_AGRFC</name>
<sequence>MSLTDLTSLETIIETAFDNRDGVNVSTKGEVRDAVNTSLQLLDSGKVRVAEKQADGNWKVNQWLKKAVLLSFRLNDMEIVTGGPGESTWWDKVPSKFENWGENQFRAAGFRAVPNAVVRRSAYVAKNVVLMPSFVNLGAYVDEGTMVDTWATVGSCAQIGKNVHLSGGVGIGGVLEPLQAGPTIIEDNCFIGARSEVVEGCIVREGAVLGMGVFIGKSTKIVDRATGEITYGEVPPYSVVVAGTMPGKPFPNGEPGPSLYCAVIVKRVDEKTRSKTGINELLRD</sequence>
<organism>
    <name type="scientific">Agrobacterium fabrum (strain C58 / ATCC 33970)</name>
    <name type="common">Agrobacterium tumefaciens (strain C58)</name>
    <dbReference type="NCBI Taxonomy" id="176299"/>
    <lineage>
        <taxon>Bacteria</taxon>
        <taxon>Pseudomonadati</taxon>
        <taxon>Pseudomonadota</taxon>
        <taxon>Alphaproteobacteria</taxon>
        <taxon>Hyphomicrobiales</taxon>
        <taxon>Rhizobiaceae</taxon>
        <taxon>Rhizobium/Agrobacterium group</taxon>
        <taxon>Agrobacterium</taxon>
        <taxon>Agrobacterium tumefaciens complex</taxon>
    </lineage>
</organism>
<proteinExistence type="inferred from homology"/>